<organism>
    <name type="scientific">Allorhizobium ampelinum (strain ATCC BAA-846 / DSM 112012 / S4)</name>
    <name type="common">Agrobacterium vitis (strain S4)</name>
    <dbReference type="NCBI Taxonomy" id="311402"/>
    <lineage>
        <taxon>Bacteria</taxon>
        <taxon>Pseudomonadati</taxon>
        <taxon>Pseudomonadota</taxon>
        <taxon>Alphaproteobacteria</taxon>
        <taxon>Hyphomicrobiales</taxon>
        <taxon>Rhizobiaceae</taxon>
        <taxon>Rhizobium/Agrobacterium group</taxon>
        <taxon>Allorhizobium</taxon>
        <taxon>Allorhizobium ampelinum</taxon>
    </lineage>
</organism>
<protein>
    <recommendedName>
        <fullName evidence="1">Transcription elongation factor GreA</fullName>
    </recommendedName>
    <alternativeName>
        <fullName evidence="1">Transcript cleavage factor GreA</fullName>
    </alternativeName>
</protein>
<reference key="1">
    <citation type="journal article" date="2009" name="J. Bacteriol.">
        <title>Genome sequences of three Agrobacterium biovars help elucidate the evolution of multichromosome genomes in bacteria.</title>
        <authorList>
            <person name="Slater S.C."/>
            <person name="Goldman B.S."/>
            <person name="Goodner B."/>
            <person name="Setubal J.C."/>
            <person name="Farrand S.K."/>
            <person name="Nester E.W."/>
            <person name="Burr T.J."/>
            <person name="Banta L."/>
            <person name="Dickerman A.W."/>
            <person name="Paulsen I."/>
            <person name="Otten L."/>
            <person name="Suen G."/>
            <person name="Welch R."/>
            <person name="Almeida N.F."/>
            <person name="Arnold F."/>
            <person name="Burton O.T."/>
            <person name="Du Z."/>
            <person name="Ewing A."/>
            <person name="Godsy E."/>
            <person name="Heisel S."/>
            <person name="Houmiel K.L."/>
            <person name="Jhaveri J."/>
            <person name="Lu J."/>
            <person name="Miller N.M."/>
            <person name="Norton S."/>
            <person name="Chen Q."/>
            <person name="Phoolcharoen W."/>
            <person name="Ohlin V."/>
            <person name="Ondrusek D."/>
            <person name="Pride N."/>
            <person name="Stricklin S.L."/>
            <person name="Sun J."/>
            <person name="Wheeler C."/>
            <person name="Wilson L."/>
            <person name="Zhu H."/>
            <person name="Wood D.W."/>
        </authorList>
    </citation>
    <scope>NUCLEOTIDE SEQUENCE [LARGE SCALE GENOMIC DNA]</scope>
    <source>
        <strain>ATCC BAA-846 / DSM 112012 / S4</strain>
    </source>
</reference>
<gene>
    <name evidence="1" type="primary">greA</name>
    <name type="ordered locus">Avi_3127</name>
</gene>
<feature type="chain" id="PRO_1000118945" description="Transcription elongation factor GreA">
    <location>
        <begin position="1"/>
        <end position="158"/>
    </location>
</feature>
<accession>B9JYZ7</accession>
<proteinExistence type="inferred from homology"/>
<keyword id="KW-0238">DNA-binding</keyword>
<keyword id="KW-1185">Reference proteome</keyword>
<keyword id="KW-0804">Transcription</keyword>
<keyword id="KW-0805">Transcription regulation</keyword>
<evidence type="ECO:0000255" key="1">
    <source>
        <dbReference type="HAMAP-Rule" id="MF_00105"/>
    </source>
</evidence>
<sequence length="158" mass="17366">MVDKVPMTQNGFSKLQEELRWRQQEERPRIIEAIAEARAHGDLSENAEYHAAKEAQSHNEGRVSELEDLTARAEVIDLSKMSGSKIKFGATVKLIDEDTDEEKIYQIVGDQEADVKAGRISISSPIARAMIGKEAGDSIEVVAPGGSKAYEIIAVNWG</sequence>
<dbReference type="EMBL" id="CP000633">
    <property type="protein sequence ID" value="ACM37243.1"/>
    <property type="molecule type" value="Genomic_DNA"/>
</dbReference>
<dbReference type="RefSeq" id="WP_015916662.1">
    <property type="nucleotide sequence ID" value="NC_011989.1"/>
</dbReference>
<dbReference type="SMR" id="B9JYZ7"/>
<dbReference type="STRING" id="311402.Avi_3127"/>
<dbReference type="KEGG" id="avi:Avi_3127"/>
<dbReference type="eggNOG" id="COG0782">
    <property type="taxonomic scope" value="Bacteria"/>
</dbReference>
<dbReference type="HOGENOM" id="CLU_101379_2_0_5"/>
<dbReference type="Proteomes" id="UP000001596">
    <property type="component" value="Chromosome 1"/>
</dbReference>
<dbReference type="GO" id="GO:0003677">
    <property type="term" value="F:DNA binding"/>
    <property type="evidence" value="ECO:0007669"/>
    <property type="project" value="UniProtKB-UniRule"/>
</dbReference>
<dbReference type="GO" id="GO:0070063">
    <property type="term" value="F:RNA polymerase binding"/>
    <property type="evidence" value="ECO:0007669"/>
    <property type="project" value="InterPro"/>
</dbReference>
<dbReference type="GO" id="GO:0006354">
    <property type="term" value="P:DNA-templated transcription elongation"/>
    <property type="evidence" value="ECO:0007669"/>
    <property type="project" value="TreeGrafter"/>
</dbReference>
<dbReference type="GO" id="GO:0032784">
    <property type="term" value="P:regulation of DNA-templated transcription elongation"/>
    <property type="evidence" value="ECO:0007669"/>
    <property type="project" value="UniProtKB-UniRule"/>
</dbReference>
<dbReference type="FunFam" id="1.10.287.180:FF:000001">
    <property type="entry name" value="Transcription elongation factor GreA"/>
    <property type="match status" value="1"/>
</dbReference>
<dbReference type="FunFam" id="3.10.50.30:FF:000001">
    <property type="entry name" value="Transcription elongation factor GreA"/>
    <property type="match status" value="1"/>
</dbReference>
<dbReference type="Gene3D" id="3.10.50.30">
    <property type="entry name" value="Transcription elongation factor, GreA/GreB, C-terminal domain"/>
    <property type="match status" value="1"/>
</dbReference>
<dbReference type="Gene3D" id="1.10.287.180">
    <property type="entry name" value="Transcription elongation factor, GreA/GreB, N-terminal domain"/>
    <property type="match status" value="1"/>
</dbReference>
<dbReference type="HAMAP" id="MF_00105">
    <property type="entry name" value="GreA_GreB"/>
    <property type="match status" value="1"/>
</dbReference>
<dbReference type="InterPro" id="IPR036953">
    <property type="entry name" value="GreA/GreB_C_sf"/>
</dbReference>
<dbReference type="InterPro" id="IPR018151">
    <property type="entry name" value="TF_GreA/GreB_CS"/>
</dbReference>
<dbReference type="InterPro" id="IPR006359">
    <property type="entry name" value="Tscrpt_elong_fac_GreA"/>
</dbReference>
<dbReference type="InterPro" id="IPR028624">
    <property type="entry name" value="Tscrpt_elong_fac_GreA/B"/>
</dbReference>
<dbReference type="InterPro" id="IPR001437">
    <property type="entry name" value="Tscrpt_elong_fac_GreA/B_C"/>
</dbReference>
<dbReference type="InterPro" id="IPR023459">
    <property type="entry name" value="Tscrpt_elong_fac_GreA/B_fam"/>
</dbReference>
<dbReference type="InterPro" id="IPR022691">
    <property type="entry name" value="Tscrpt_elong_fac_GreA/B_N"/>
</dbReference>
<dbReference type="InterPro" id="IPR036805">
    <property type="entry name" value="Tscrpt_elong_fac_GreA/B_N_sf"/>
</dbReference>
<dbReference type="NCBIfam" id="TIGR01462">
    <property type="entry name" value="greA"/>
    <property type="match status" value="1"/>
</dbReference>
<dbReference type="NCBIfam" id="NF001261">
    <property type="entry name" value="PRK00226.1-2"/>
    <property type="match status" value="1"/>
</dbReference>
<dbReference type="NCBIfam" id="NF001263">
    <property type="entry name" value="PRK00226.1-4"/>
    <property type="match status" value="1"/>
</dbReference>
<dbReference type="NCBIfam" id="NF001264">
    <property type="entry name" value="PRK00226.1-5"/>
    <property type="match status" value="1"/>
</dbReference>
<dbReference type="PANTHER" id="PTHR30437">
    <property type="entry name" value="TRANSCRIPTION ELONGATION FACTOR GREA"/>
    <property type="match status" value="1"/>
</dbReference>
<dbReference type="PANTHER" id="PTHR30437:SF4">
    <property type="entry name" value="TRANSCRIPTION ELONGATION FACTOR GREA"/>
    <property type="match status" value="1"/>
</dbReference>
<dbReference type="Pfam" id="PF01272">
    <property type="entry name" value="GreA_GreB"/>
    <property type="match status" value="1"/>
</dbReference>
<dbReference type="Pfam" id="PF03449">
    <property type="entry name" value="GreA_GreB_N"/>
    <property type="match status" value="1"/>
</dbReference>
<dbReference type="PIRSF" id="PIRSF006092">
    <property type="entry name" value="GreA_GreB"/>
    <property type="match status" value="1"/>
</dbReference>
<dbReference type="SUPFAM" id="SSF54534">
    <property type="entry name" value="FKBP-like"/>
    <property type="match status" value="1"/>
</dbReference>
<dbReference type="SUPFAM" id="SSF46557">
    <property type="entry name" value="GreA transcript cleavage protein, N-terminal domain"/>
    <property type="match status" value="1"/>
</dbReference>
<dbReference type="PROSITE" id="PS00829">
    <property type="entry name" value="GREAB_1"/>
    <property type="match status" value="1"/>
</dbReference>
<dbReference type="PROSITE" id="PS00830">
    <property type="entry name" value="GREAB_2"/>
    <property type="match status" value="1"/>
</dbReference>
<name>GREA_ALLAM</name>
<comment type="function">
    <text evidence="1">Necessary for efficient RNA polymerase transcription elongation past template-encoded arresting sites. The arresting sites in DNA have the property of trapping a certain fraction of elongating RNA polymerases that pass through, resulting in locked ternary complexes. Cleavage of the nascent transcript by cleavage factors such as GreA or GreB allows the resumption of elongation from the new 3'terminus. GreA releases sequences of 2 to 3 nucleotides.</text>
</comment>
<comment type="similarity">
    <text evidence="1">Belongs to the GreA/GreB family.</text>
</comment>